<evidence type="ECO:0000255" key="1">
    <source>
        <dbReference type="HAMAP-Rule" id="MF_01440"/>
    </source>
</evidence>
<comment type="function">
    <text evidence="1">Probably deamidates glutamine residues to glutamate on methyl-accepting chemotaxis receptors (MCPs), playing an important role in chemotaxis.</text>
</comment>
<comment type="catalytic activity">
    <reaction evidence="1">
        <text>L-glutaminyl-[protein] + H2O = L-glutamyl-[protein] + NH4(+)</text>
        <dbReference type="Rhea" id="RHEA:16441"/>
        <dbReference type="Rhea" id="RHEA-COMP:10207"/>
        <dbReference type="Rhea" id="RHEA-COMP:10208"/>
        <dbReference type="ChEBI" id="CHEBI:15377"/>
        <dbReference type="ChEBI" id="CHEBI:28938"/>
        <dbReference type="ChEBI" id="CHEBI:29973"/>
        <dbReference type="ChEBI" id="CHEBI:30011"/>
        <dbReference type="EC" id="3.5.1.44"/>
    </reaction>
</comment>
<comment type="similarity">
    <text evidence="1">Belongs to the CheD family.</text>
</comment>
<proteinExistence type="inferred from homology"/>
<name>CHED_BORAP</name>
<gene>
    <name evidence="1" type="primary">cheD</name>
    <name type="ordered locus">BAPKO_0639</name>
    <name type="ordered locus">BafPKo_0623</name>
</gene>
<protein>
    <recommendedName>
        <fullName evidence="1">Probable chemoreceptor glutamine deamidase CheD</fullName>
        <ecNumber evidence="1">3.5.1.44</ecNumber>
    </recommendedName>
</protein>
<organism>
    <name type="scientific">Borreliella afzelii (strain PKo)</name>
    <name type="common">Borrelia afzelii</name>
    <dbReference type="NCBI Taxonomy" id="390236"/>
    <lineage>
        <taxon>Bacteria</taxon>
        <taxon>Pseudomonadati</taxon>
        <taxon>Spirochaetota</taxon>
        <taxon>Spirochaetia</taxon>
        <taxon>Spirochaetales</taxon>
        <taxon>Borreliaceae</taxon>
        <taxon>Borreliella</taxon>
    </lineage>
</organism>
<accession>Q0SMQ0</accession>
<accession>G0IQF7</accession>
<keyword id="KW-0145">Chemotaxis</keyword>
<keyword id="KW-0378">Hydrolase</keyword>
<sequence>MLNHFNFKLKRDVTIIVPGEAFVSNKRVISTILGSCVAVVLCDESSNLIGMNHYVLVKSDLDISPAQRGRYGIYAIPMLINAMLENGANKSNLKAKLFGGTNFMAKGSVKVGLENSEFAINTLNKYRIPILAKDFDQSKSRKIFAFPESFKVIVEYPDGTKVF</sequence>
<feature type="chain" id="PRO_1000068543" description="Probable chemoreceptor glutamine deamidase CheD">
    <location>
        <begin position="1"/>
        <end position="163"/>
    </location>
</feature>
<reference key="1">
    <citation type="journal article" date="2006" name="BMC Genomics">
        <title>Comparative genome analysis: selection pressure on the Borrelia vls cassettes is essential for infectivity.</title>
        <authorList>
            <person name="Gloeckner G."/>
            <person name="Schulte-Spechtel U."/>
            <person name="Schilhabel M."/>
            <person name="Felder M."/>
            <person name="Suehnel J."/>
            <person name="Wilske B."/>
            <person name="Platzer M."/>
        </authorList>
    </citation>
    <scope>NUCLEOTIDE SEQUENCE [LARGE SCALE GENOMIC DNA]</scope>
    <source>
        <strain>PKo</strain>
    </source>
</reference>
<reference key="2">
    <citation type="journal article" date="2011" name="J. Bacteriol.">
        <title>Whole-genome sequences of two Borrelia afzelii and two Borrelia garinii Lyme disease agent isolates.</title>
        <authorList>
            <person name="Casjens S.R."/>
            <person name="Mongodin E.F."/>
            <person name="Qiu W.G."/>
            <person name="Dunn J.J."/>
            <person name="Luft B.J."/>
            <person name="Fraser-Liggett C.M."/>
            <person name="Schutzer S.E."/>
        </authorList>
    </citation>
    <scope>NUCLEOTIDE SEQUENCE [LARGE SCALE GENOMIC DNA]</scope>
    <source>
        <strain>PKo</strain>
    </source>
</reference>
<dbReference type="EC" id="3.5.1.44" evidence="1"/>
<dbReference type="EMBL" id="CP000395">
    <property type="protein sequence ID" value="ABH01878.1"/>
    <property type="molecule type" value="Genomic_DNA"/>
</dbReference>
<dbReference type="EMBL" id="CP002933">
    <property type="protein sequence ID" value="AEL69827.1"/>
    <property type="molecule type" value="Genomic_DNA"/>
</dbReference>
<dbReference type="RefSeq" id="WP_004789631.1">
    <property type="nucleotide sequence ID" value="NZ_CP160066.1"/>
</dbReference>
<dbReference type="SMR" id="Q0SMQ0"/>
<dbReference type="STRING" id="29518.BLA32_01235"/>
<dbReference type="GeneID" id="77265452"/>
<dbReference type="KEGG" id="baf:BAPKO_0639"/>
<dbReference type="KEGG" id="bafz:BafPKo_0623"/>
<dbReference type="PATRIC" id="fig|390236.22.peg.600"/>
<dbReference type="eggNOG" id="COG1871">
    <property type="taxonomic scope" value="Bacteria"/>
</dbReference>
<dbReference type="HOGENOM" id="CLU_087854_0_0_12"/>
<dbReference type="OrthoDB" id="9807202at2"/>
<dbReference type="Proteomes" id="UP000005216">
    <property type="component" value="Chromosome"/>
</dbReference>
<dbReference type="GO" id="GO:0050568">
    <property type="term" value="F:protein-glutamine glutaminase activity"/>
    <property type="evidence" value="ECO:0007669"/>
    <property type="project" value="UniProtKB-UniRule"/>
</dbReference>
<dbReference type="GO" id="GO:0006935">
    <property type="term" value="P:chemotaxis"/>
    <property type="evidence" value="ECO:0007669"/>
    <property type="project" value="UniProtKB-UniRule"/>
</dbReference>
<dbReference type="CDD" id="cd16352">
    <property type="entry name" value="CheD"/>
    <property type="match status" value="1"/>
</dbReference>
<dbReference type="Gene3D" id="3.30.1330.200">
    <property type="match status" value="1"/>
</dbReference>
<dbReference type="HAMAP" id="MF_01440">
    <property type="entry name" value="CheD"/>
    <property type="match status" value="1"/>
</dbReference>
<dbReference type="InterPro" id="IPR038592">
    <property type="entry name" value="CheD-like_sf"/>
</dbReference>
<dbReference type="InterPro" id="IPR005659">
    <property type="entry name" value="Chemorcpt_Glu_NH3ase_CheD"/>
</dbReference>
<dbReference type="InterPro" id="IPR011324">
    <property type="entry name" value="Cytotoxic_necrot_fac-like_cat"/>
</dbReference>
<dbReference type="NCBIfam" id="NF010017">
    <property type="entry name" value="PRK13494.1"/>
    <property type="match status" value="1"/>
</dbReference>
<dbReference type="PANTHER" id="PTHR35147">
    <property type="entry name" value="CHEMORECEPTOR GLUTAMINE DEAMIDASE CHED-RELATED"/>
    <property type="match status" value="1"/>
</dbReference>
<dbReference type="PANTHER" id="PTHR35147:SF2">
    <property type="entry name" value="CHEMORECEPTOR GLUTAMINE DEAMIDASE CHED-RELATED"/>
    <property type="match status" value="1"/>
</dbReference>
<dbReference type="Pfam" id="PF03975">
    <property type="entry name" value="CheD"/>
    <property type="match status" value="1"/>
</dbReference>
<dbReference type="SUPFAM" id="SSF64438">
    <property type="entry name" value="CNF1/YfiH-like putative cysteine hydrolases"/>
    <property type="match status" value="1"/>
</dbReference>